<organism>
    <name type="scientific">Rattus norvegicus</name>
    <name type="common">Rat</name>
    <dbReference type="NCBI Taxonomy" id="10116"/>
    <lineage>
        <taxon>Eukaryota</taxon>
        <taxon>Metazoa</taxon>
        <taxon>Chordata</taxon>
        <taxon>Craniata</taxon>
        <taxon>Vertebrata</taxon>
        <taxon>Euteleostomi</taxon>
        <taxon>Mammalia</taxon>
        <taxon>Eutheria</taxon>
        <taxon>Euarchontoglires</taxon>
        <taxon>Glires</taxon>
        <taxon>Rodentia</taxon>
        <taxon>Myomorpha</taxon>
        <taxon>Muroidea</taxon>
        <taxon>Muridae</taxon>
        <taxon>Murinae</taxon>
        <taxon>Rattus</taxon>
    </lineage>
</organism>
<accession>P20156</accession>
<comment type="function">
    <molecule>Neurosecretory protein VGF</molecule>
    <text evidence="2 5 17">Secreted polyprotein that is packaged and proteolytically processed by prohormone convertases PCSK1 and PCSK2 in a cell-type-specific manner (PubMed:12065665, PubMed:7595538). VGF and peptides derived from its processing play many roles in neurogenesis and neuroplasticity associated with learning, memory, depression and chronic pain (By similarity).</text>
</comment>
<comment type="function">
    <molecule>Neuroendocrine regulatory peptide-1</molecule>
    <text evidence="13">Plays a role in the control of body fluid homeostasis by regulating vasopressin release. Suppresses presynaptic glutamatergic neurons connected to vasopressin neurons.</text>
</comment>
<comment type="function">
    <molecule>Neuroendocrine regulatory peptide-2</molecule>
    <text evidence="10 13 16">Plays a role in the control of body fluid homeostasis by regulating vasopressin release. Activates GABAergic interneurons which are inhibitory neurons of the nervous system and thereby suppresses presynaptic glutamatergic neurons (PubMed:24704271). Also stimulates feeding behavior in an orexin-dependent manner in the hypothalamus (PubMed:20551287). Functions as a positive regulator for the activation of orexin neurons resulting in elevated gastric acid secretion and gastric emptying (PubMed:28213131).</text>
</comment>
<comment type="function">
    <molecule>VGF-derived peptide TLQP-21</molecule>
    <text evidence="6 9 11 12 15">Secreted multifunctional neuropeptide that binds to different cell receptors and thereby plays multiple physiological roles including modulation of energy expenditure, pain, response to stress, gastric regulation, glucose homeostasis as well as lipolysis (PubMed:16983076, PubMed:28123945). Activates the G-protein-coupled receptor C3AR1 via a folding-upon-binding mechanism leading to enhanced lipolysis in adipocytes (PubMed:23940034, PubMed:28123945). Interacts with C1QBP receptor in macrophages and microglia causing increased levels of intracellular calcium and hypersensitivity (PubMed:19466987, PubMed:24106277).</text>
</comment>
<comment type="function">
    <molecule>VGF-derived peptide TLQP-62</molecule>
    <text evidence="2 14">Plays a role in the regulation of memory formation and depression-related behaviors potentially by influencing synaptic plasticity and neurogenesis. Induces acute and transient activation of the NTRK2/TRKB receptor and subsequent CREB phosphorylation (By similarity). Also induces insulin secretion in insulinoma cells by increasing intracellular calcium mobilization (PubMed:25917832).</text>
</comment>
<comment type="subunit">
    <molecule>VGF-derived peptide TLQP-21</molecule>
    <text evidence="1 2 12">Interacts with HSPA8 on cell membrane (By similarity). Interacts with C3AR1 (By similarity). Interacts with C1QBP (PubMed:24106277).</text>
</comment>
<comment type="subcellular location">
    <molecule>Neurosecretory protein VGF</molecule>
    <subcellularLocation>
        <location evidence="1">Secreted</location>
    </subcellularLocation>
    <subcellularLocation>
        <location evidence="1">Cytoplasmic vesicle</location>
        <location evidence="1">Secretory vesicle</location>
    </subcellularLocation>
    <text evidence="1">Stored in secretory vesicles and then secreted, NERP peptides colocalize with vasopressin in the storage granules of hypothalamus.</text>
</comment>
<comment type="tissue specificity">
    <text evidence="5 8">Central and peripheral nervous systems, synthesized exclusively in neuronal and neuroendocrine cells. VGF and several of the derived peptides are present in the brain.</text>
</comment>
<comment type="induction">
    <text>By nerve growth factor.</text>
</comment>
<comment type="PTM">
    <text>Multiple peptides are derived from VGF, with activities in synaptic plasticity, antidepression, penile erection, autonomic activation, and increases in energy expenditure.</text>
</comment>
<comment type="mass spectrometry" mass="4164.694" method="Electrospray" evidence="7">
    <molecule>VGF(24-63)</molecule>
</comment>
<comment type="mass spectrometry" mass="1655.73" method="Electrospray" evidence="7">
    <molecule>VGF(180-194)</molecule>
</comment>
<comment type="mass spectrometry" mass="3470.868" method="Electrospray" evidence="7">
    <molecule>VGF(375-407)</molecule>
</comment>
<reference key="1">
    <citation type="journal article" date="1989" name="EMBO J.">
        <title>A protein induced by NGF in PC12 cells is stored in secretory vesicles and released through the regulated pathway.</title>
        <authorList>
            <person name="Possenti R."/>
            <person name="Eldridge J.D."/>
            <person name="Paterson B.M."/>
            <person name="Grasso A."/>
            <person name="Levi A."/>
        </authorList>
    </citation>
    <scope>NUCLEOTIDE SEQUENCE [MRNA]</scope>
</reference>
<reference key="2">
    <citation type="submission" date="1995-10" db="UniProtKB">
        <authorList>
            <person name="Possenti R."/>
        </authorList>
    </citation>
    <scope>SEQUENCE REVISION</scope>
</reference>
<reference key="3">
    <citation type="journal article" date="1991" name="Mol. Cell. Biol.">
        <title>Structure of the gene encoding VGF, a nervous system-specific mRNA that is rapidly and selectively induced by nerve growth factor in PC12 cells.</title>
        <authorList>
            <person name="Salton S.R.J."/>
            <person name="Fischberg D.J."/>
            <person name="Dong K.-W."/>
        </authorList>
    </citation>
    <scope>NUCLEOTIDE SEQUENCE [GENOMIC DNA / MRNA]</scope>
</reference>
<reference key="4">
    <citation type="journal article" date="1992" name="J. Neurosci.">
        <title>NGF induces the expression of the VGF gene through a cAMP response element.</title>
        <authorList>
            <person name="Hawley R.J."/>
            <person name="Scheibe R.J."/>
            <person name="Wagner J.A."/>
        </authorList>
    </citation>
    <scope>NUCLEOTIDE SEQUENCE [MRNA]</scope>
</reference>
<reference key="5">
    <citation type="journal article" date="1995" name="J. Neurochem.">
        <title>Tissue-specific processing of the neuroendocrine protein VGF.</title>
        <authorList>
            <person name="Trani E."/>
            <person name="Ciotti T."/>
            <person name="Rinaldi A.M."/>
            <person name="Canu N."/>
            <person name="Ferri G.L."/>
            <person name="Levi A."/>
            <person name="Possenti R."/>
        </authorList>
    </citation>
    <scope>FUNCTION (NEUROSECRETORY PROTEIN VGF)</scope>
</reference>
<reference key="6">
    <citation type="journal article" date="2002" name="J. Neurochem.">
        <title>Isolation and characterization of VGF peptides in rat brain. Role of PC1/3 and PC2 in the maturation of VGF precursor.</title>
        <authorList>
            <person name="Trani E."/>
            <person name="Giorgi A."/>
            <person name="Canu N."/>
            <person name="Amadoro G."/>
            <person name="Rinaldi A.M."/>
            <person name="Halban P.A."/>
            <person name="Ferri G.L."/>
            <person name="Possenti R."/>
            <person name="Schinina M.E."/>
            <person name="Levi A."/>
        </authorList>
    </citation>
    <scope>FUNCTION (NEUROSECRETORY PROTEIN VGF)</scope>
    <scope>TISSUE SPECIFICITY</scope>
</reference>
<reference key="7">
    <citation type="journal article" date="2006" name="Proc. Natl. Acad. Sci. U.S.A.">
        <title>TLQP-21, a VGF-derived peptide, increases energy expenditure and prevents the early phase of diet-induced obesity.</title>
        <authorList>
            <person name="Bartolomucci A."/>
            <person name="La Corte G."/>
            <person name="Possenti R."/>
            <person name="Locatelli V."/>
            <person name="Rigamonti A.E."/>
            <person name="Torsello A."/>
            <person name="Bresciani E."/>
            <person name="Bulgarelli I."/>
            <person name="Rizzi R."/>
            <person name="Pavone F."/>
            <person name="D'Amato F.R."/>
            <person name="Severini C."/>
            <person name="Mignogna G."/>
            <person name="Giorgi A."/>
            <person name="Schinina M.E."/>
            <person name="Elia G."/>
            <person name="Brancia C."/>
            <person name="Ferri G.L."/>
            <person name="Conti R."/>
            <person name="Ciani B."/>
            <person name="Pascucci T."/>
            <person name="Dell'Omo G."/>
            <person name="Muller E.E."/>
            <person name="Levi A."/>
            <person name="Moles A."/>
        </authorList>
    </citation>
    <scope>FUNCTION (VGF-DERIVED PEPTIDE TLQP-21)</scope>
</reference>
<reference key="8">
    <citation type="journal article" date="2009" name="Mol. Cell. Proteomics">
        <title>Discovering new bioactive neuropeptides in the striatum secretome using in vivo microdialysis and versatile proteomics.</title>
        <authorList>
            <person name="Bernay B."/>
            <person name="Gaillard M.-C."/>
            <person name="Guryca V."/>
            <person name="Emadali A."/>
            <person name="Kuhn L."/>
            <person name="Bertrand A."/>
            <person name="Detraz I."/>
            <person name="Carcenac C."/>
            <person name="Savasta M."/>
            <person name="Brouillet E."/>
            <person name="Garin J."/>
            <person name="Elalouf J.-M."/>
        </authorList>
    </citation>
    <scope>PROTEIN SEQUENCE OF 24-63; 180-194 AND 375-407</scope>
    <scope>MASS SPECTROMETRY</scope>
    <scope>PYROGLUTAMATE FORMATION AT GLN-180</scope>
    <source>
        <strain>Wistar</strain>
        <tissue>Corpus striatum</tissue>
    </source>
</reference>
<reference key="9">
    <citation type="journal article" date="2009" name="Br. J. Pharmacol.">
        <title>In vitro and in vivo pharmacological role of TLQP-21, a VGF-derived peptide, in the regulation of rat gastric motor functions.</title>
        <authorList>
            <person name="Severini C."/>
            <person name="La Corte G."/>
            <person name="Improta G."/>
            <person name="Broccardo M."/>
            <person name="Agostini S."/>
            <person name="Petrella C."/>
            <person name="Sibilia V."/>
            <person name="Pagani F."/>
            <person name="Guidobono F."/>
            <person name="Bulgarelli I."/>
            <person name="Ferri G.L."/>
            <person name="Brancia C."/>
            <person name="Rinaldi A.M."/>
            <person name="Levi A."/>
            <person name="Possenti R."/>
        </authorList>
    </citation>
    <scope>FUNCTION (VGF-DERIVED PEPTIDE TLQP-21)</scope>
</reference>
<reference key="10">
    <citation type="journal article" date="2009" name="Cell. Mol. Life Sci.">
        <title>Neuroendocrine regulatory peptide-1 and -2: novel bioactive peptides processed from VGF.</title>
        <authorList>
            <person name="Toshinai K."/>
            <person name="Nakazato M."/>
        </authorList>
    </citation>
    <scope>FUNCTION (NEUROENDOCRINE REGULATORY PEPTIDE-1)</scope>
    <scope>FUNCTION (NEUROENDOCRINE REGULATORY PEPTIDE-2)</scope>
    <scope>PYROGLUTAMATE FORMATION AT GLN-313</scope>
    <scope>TISSUE SPECIFICITY</scope>
</reference>
<reference key="11">
    <citation type="journal article" date="2010" name="Am. J. Physiol.">
        <title>Neuroendocrine regulatory peptide-2 regulates feeding behavior via the orexin system in the hypothalamus.</title>
        <authorList>
            <person name="Toshinai K."/>
            <person name="Yamaguchi H."/>
            <person name="Kageyama H."/>
            <person name="Matsuo T."/>
            <person name="Koshinaka K."/>
            <person name="Sasaki K."/>
            <person name="Shioda S."/>
            <person name="Minamino N."/>
            <person name="Nakazato M."/>
        </authorList>
    </citation>
    <scope>FUNCTION (NEUROENDOCRINE REGULATORY PEPTIDE-2)</scope>
</reference>
<reference key="12">
    <citation type="journal article" date="2013" name="J. Biol. Chem.">
        <title>Identification of the C3a receptor (C3AR1) as the target of the VGF-derived peptide TLQP-21 in rodent cells.</title>
        <authorList>
            <person name="Hannedouche S."/>
            <person name="Beck V."/>
            <person name="Leighton-Davies J."/>
            <person name="Beibel M."/>
            <person name="Roma G."/>
            <person name="Oakeley E.J."/>
            <person name="Lannoy V."/>
            <person name="Bernard J."/>
            <person name="Hamon J."/>
            <person name="Barbieri S."/>
            <person name="Preuss I."/>
            <person name="Lasbennes M.C."/>
            <person name="Sailer A.W."/>
            <person name="Suply T."/>
            <person name="Seuwen K."/>
            <person name="Parker C.N."/>
            <person name="Bassilana F."/>
        </authorList>
    </citation>
    <scope>FUNCTION (VGF-DERIVED PEPTIDE TLQP-21)</scope>
    <scope>INTERACTION WITH C3AR1 (VGF-DERIVED PEPTIDE TLQP-21)</scope>
</reference>
<reference key="13">
    <citation type="journal article" date="2013" name="J. Biol. Chem.">
        <title>Identification of a receptor for neuropeptide VGF and its role in neuropathic pain.</title>
        <authorList>
            <person name="Chen Y.C."/>
            <person name="Pristera A."/>
            <person name="Ayub M."/>
            <person name="Swanwick R.S."/>
            <person name="Karu K."/>
            <person name="Hamada Y."/>
            <person name="Rice A.S."/>
            <person name="Okuse K."/>
        </authorList>
    </citation>
    <scope>FUNCTION (VGF-DERIVED PEPTIDE TLQP-21)</scope>
    <scope>INTERACTION WITH C1QBP (VGF-DERIVED PEPTIDE TLQP-21)</scope>
</reference>
<reference key="14">
    <citation type="journal article" date="2014" name="Brain Res.">
        <title>Neuroendocrine regulatory peptide-1 and -2 (NERPs) inhibit the excitability of magnocellular neurosecretory cells in the hypothalamus.</title>
        <authorList>
            <person name="Toshinai K."/>
            <person name="Saito T."/>
            <person name="Yamaguchi H."/>
            <person name="Sasaki K."/>
            <person name="Tsuchimochi W."/>
            <person name="Minamino N."/>
            <person name="Ueta Y."/>
            <person name="Nakazato M."/>
        </authorList>
    </citation>
    <scope>FUNCTION (NEUROENDOCRINE REGULATORY PEPTIDE-1)</scope>
    <scope>FUNCTION (NEUROENDOCRINE REGULATORY PEPTIDE-2)</scope>
</reference>
<reference key="15">
    <citation type="journal article" date="2015" name="J. Mol. Endocrinol.">
        <title>The VGF-derived peptide TLQP-62 modulates insulin secretion and glucose homeostasis.</title>
        <authorList>
            <person name="Petrocchi-Passeri P."/>
            <person name="Cero C."/>
            <person name="Cutarelli A."/>
            <person name="Frank C."/>
            <person name="Severini C."/>
            <person name="Bartolomucci A."/>
            <person name="Possenti R."/>
        </authorList>
    </citation>
    <scope>FUNCTION (VGF-DERIVED PEPTIDE TLQP-62)</scope>
</reference>
<reference key="16">
    <citation type="journal article" date="2017" name="Biochem. Biophys. Res. Commun.">
        <title>NERP-2 regulates gastric acid secretion and gastric emptying via the orexin pathway.</title>
        <authorList>
            <person name="Namkoong C."/>
            <person name="Toshinai K."/>
            <person name="Waise T.M.Z."/>
            <person name="Sakoda H."/>
            <person name="Sasaki K."/>
            <person name="Ueta Y."/>
            <person name="Kim M.S."/>
            <person name="Minamino N."/>
            <person name="Nakazato M."/>
        </authorList>
    </citation>
    <scope>FUNCTION (NEUROENDOCRINE REGULATORY PEPTIDE-2)</scope>
</reference>
<reference key="17">
    <citation type="journal article" date="2017" name="Mol. Metab.">
        <title>The neuropeptide TLQP-21 opposes obesity via C3aR1-mediated enhancement of adrenergic-induced lipolysis.</title>
        <authorList>
            <person name="Cero C."/>
            <person name="Razzoli M."/>
            <person name="Han R."/>
            <person name="Sahu B.S."/>
            <person name="Patricelli J."/>
            <person name="Guo Z."/>
            <person name="Zaidman N.A."/>
            <person name="Miles J.M."/>
            <person name="O'Grady S.M."/>
            <person name="Bartolomucci A."/>
        </authorList>
    </citation>
    <scope>FUNCTION (VGF-DERIVED PEPTIDE TLQP-21)</scope>
</reference>
<sequence length="617" mass="68179">MKTFTLPASVLFCFLLLIRGLGAAPPGRSDVYPPPLGSEHNGQVAEDAVSRPKDDSVPEVRAARNSEPQDQGELFQGVDPRALAAVLLQALDRPASPPAVPAGSQQGTPEEAAEALLTESVRSQTHSLPASEIQASAVAPPRPQTQDNDPEADDRSEELEALASLLQELRDFSPSNAKRQQETAAAETETRTHTLTRVNLESPGPERVWRASWGEFQARVPERAPLPPSVPSQFQARMSENVPLPETHQFGEGVSSPKTHLGETLTPLSKAYQSLSAPFPKVRRLEGSFLGGSEAGERLLQQGLAQVEAGRRQAEATRQAAAQEERLADLASDLLLQYLLQGGARQRDLGGRGLQETQQERENEREEEAEQERRGGGEDEVGEEDEEAAEAEAEAEEAERARQNALLFAEEEDGEAGAEDKRSQEEAPGHRRKDAEGTEEGGEEDDDDEEMDPQTIDSLIELSTKLHLPADDVVSIIEEVEEKRKRKKNAPPEPVPPPRAAPAPTHVRSPQPPPPAPARDELPDWNEVLPPWDREEDEVFPPGPYHPFPNYIRPRTLQPPASSRRRHFHHALPPARHHPDLEAQARRAQEEADAEERRLQEQEELENYIEHVLLHRP</sequence>
<gene>
    <name type="primary">Vgf</name>
</gene>
<keyword id="KW-0027">Amidation</keyword>
<keyword id="KW-0165">Cleavage on pair of basic residues</keyword>
<keyword id="KW-0968">Cytoplasmic vesicle</keyword>
<keyword id="KW-0903">Direct protein sequencing</keyword>
<keyword id="KW-0339">Growth factor</keyword>
<keyword id="KW-0597">Phosphoprotein</keyword>
<keyword id="KW-0873">Pyrrolidone carboxylic acid</keyword>
<keyword id="KW-1185">Reference proteome</keyword>
<keyword id="KW-0964">Secreted</keyword>
<keyword id="KW-0732">Signal</keyword>
<evidence type="ECO:0000250" key="1">
    <source>
        <dbReference type="UniProtKB" id="O15240"/>
    </source>
</evidence>
<evidence type="ECO:0000250" key="2">
    <source>
        <dbReference type="UniProtKB" id="Q0VGU4"/>
    </source>
</evidence>
<evidence type="ECO:0000255" key="3"/>
<evidence type="ECO:0000256" key="4">
    <source>
        <dbReference type="SAM" id="MobiDB-lite"/>
    </source>
</evidence>
<evidence type="ECO:0000269" key="5">
    <source>
    </source>
</evidence>
<evidence type="ECO:0000269" key="6">
    <source>
    </source>
</evidence>
<evidence type="ECO:0000269" key="7">
    <source>
    </source>
</evidence>
<evidence type="ECO:0000269" key="8">
    <source>
    </source>
</evidence>
<evidence type="ECO:0000269" key="9">
    <source>
    </source>
</evidence>
<evidence type="ECO:0000269" key="10">
    <source>
    </source>
</evidence>
<evidence type="ECO:0000269" key="11">
    <source>
    </source>
</evidence>
<evidence type="ECO:0000269" key="12">
    <source>
    </source>
</evidence>
<evidence type="ECO:0000269" key="13">
    <source>
    </source>
</evidence>
<evidence type="ECO:0000269" key="14">
    <source>
    </source>
</evidence>
<evidence type="ECO:0000269" key="15">
    <source>
    </source>
</evidence>
<evidence type="ECO:0000269" key="16">
    <source>
    </source>
</evidence>
<evidence type="ECO:0000269" key="17">
    <source>
    </source>
</evidence>
<evidence type="ECO:0000305" key="18"/>
<name>VGF_RAT</name>
<proteinExistence type="evidence at protein level"/>
<feature type="signal peptide" evidence="3">
    <location>
        <begin position="1"/>
        <end position="23"/>
    </location>
</feature>
<feature type="chain" id="PRO_0000022656" description="Neurosecretory protein VGF">
    <location>
        <begin position="24"/>
        <end position="617"/>
    </location>
</feature>
<feature type="peptide" id="PRO_0000375995" description="VGF(24-63)">
    <location>
        <begin position="24"/>
        <end position="63"/>
    </location>
</feature>
<feature type="peptide" id="PRO_0000375996" description="VGF(180-194)">
    <location>
        <begin position="180"/>
        <end position="194"/>
    </location>
</feature>
<feature type="peptide" id="PRO_0000403366" description="Neuroendocrine regulatory peptide-1">
    <location>
        <begin position="285"/>
        <end position="309"/>
    </location>
</feature>
<feature type="peptide" id="PRO_0000403367" description="Neuroendocrine regulatory peptide-2">
    <location>
        <begin position="313"/>
        <end position="350"/>
    </location>
</feature>
<feature type="peptide" id="PRO_0000375997" description="VGF(375-407)">
    <location>
        <begin position="375"/>
        <end position="407"/>
    </location>
</feature>
<feature type="peptide" id="PRO_0000403368" description="VGF-derived peptide TLQP-62">
    <location>
        <begin position="556"/>
        <end position="617"/>
    </location>
</feature>
<feature type="peptide" id="PRO_0000403369" description="VGF-derived peptide TLQP-30">
    <location>
        <begin position="556"/>
        <end position="587"/>
    </location>
</feature>
<feature type="peptide" id="PRO_0000403370" description="VGF-derived peptide TLQP-21">
    <location>
        <begin position="556"/>
        <end position="576"/>
    </location>
</feature>
<feature type="peptide" id="PRO_0000403371" description="VGF-derived peptide TLQP-11">
    <location>
        <begin position="556"/>
        <end position="566"/>
    </location>
</feature>
<feature type="peptide" id="PRO_0000403372" description="VGF-derived peptide HFHH-10">
    <location>
        <begin position="567"/>
        <end position="576"/>
    </location>
</feature>
<feature type="peptide" id="PRO_0000403373" description="VGF-derived peptide AQEE-30">
    <location>
        <begin position="588"/>
        <end position="617"/>
    </location>
</feature>
<feature type="peptide" id="PRO_0000403374" description="VGF-derived peptide LQEQ-19">
    <location>
        <begin position="599"/>
        <end position="617"/>
    </location>
</feature>
<feature type="region of interest" description="Disordered" evidence="4">
    <location>
        <begin position="29"/>
        <end position="75"/>
    </location>
</feature>
<feature type="region of interest" description="Disordered" evidence="4">
    <location>
        <begin position="94"/>
        <end position="113"/>
    </location>
</feature>
<feature type="region of interest" description="Disordered" evidence="4">
    <location>
        <begin position="121"/>
        <end position="157"/>
    </location>
</feature>
<feature type="region of interest" description="Disordered" evidence="4">
    <location>
        <begin position="169"/>
        <end position="192"/>
    </location>
</feature>
<feature type="region of interest" description="Disordered" evidence="4">
    <location>
        <begin position="348"/>
        <end position="603"/>
    </location>
</feature>
<feature type="compositionally biased region" description="Basic and acidic residues" evidence="4">
    <location>
        <begin position="48"/>
        <end position="64"/>
    </location>
</feature>
<feature type="compositionally biased region" description="Acidic residues" evidence="4">
    <location>
        <begin position="148"/>
        <end position="157"/>
    </location>
</feature>
<feature type="compositionally biased region" description="Low complexity" evidence="4">
    <location>
        <begin position="182"/>
        <end position="192"/>
    </location>
</feature>
<feature type="compositionally biased region" description="Acidic residues" evidence="4">
    <location>
        <begin position="378"/>
        <end position="397"/>
    </location>
</feature>
<feature type="compositionally biased region" description="Basic and acidic residues" evidence="4">
    <location>
        <begin position="418"/>
        <end position="436"/>
    </location>
</feature>
<feature type="compositionally biased region" description="Acidic residues" evidence="4">
    <location>
        <begin position="437"/>
        <end position="452"/>
    </location>
</feature>
<feature type="compositionally biased region" description="Pro residues" evidence="4">
    <location>
        <begin position="491"/>
        <end position="501"/>
    </location>
</feature>
<feature type="compositionally biased region" description="Basic and acidic residues" evidence="4">
    <location>
        <begin position="577"/>
        <end position="601"/>
    </location>
</feature>
<feature type="modified residue" description="Pyrrolidone carboxylic acid" evidence="7">
    <location>
        <position position="180"/>
    </location>
</feature>
<feature type="modified residue" description="Pyrrolidone carboxylic acid" evidence="8">
    <location>
        <position position="313"/>
    </location>
</feature>
<feature type="modified residue" description="Phosphoserine" evidence="1">
    <location>
        <position position="423"/>
    </location>
</feature>
<feature type="sequence conflict" description="In Ref. 1." evidence="18" ref="1">
    <original>G</original>
    <variation>A</variation>
    <location>
        <position position="342"/>
    </location>
</feature>
<dbReference type="EMBL" id="M60522">
    <property type="protein sequence ID" value="AAA41700.1"/>
    <property type="molecule type" value="Genomic_DNA"/>
</dbReference>
<dbReference type="EMBL" id="M60525">
    <property type="protein sequence ID" value="AAA86428.1"/>
    <property type="molecule type" value="mRNA"/>
</dbReference>
<dbReference type="EMBL" id="M74223">
    <property type="protein sequence ID" value="AAA42336.1"/>
    <property type="molecule type" value="mRNA"/>
</dbReference>
<dbReference type="PIR" id="I56530">
    <property type="entry name" value="I56530"/>
</dbReference>
<dbReference type="PIR" id="S05381">
    <property type="entry name" value="S05381"/>
</dbReference>
<dbReference type="RefSeq" id="NP_001382504.1">
    <property type="nucleotide sequence ID" value="NM_001395575.1"/>
</dbReference>
<dbReference type="RefSeq" id="NP_112259.1">
    <property type="nucleotide sequence ID" value="NM_030997.2"/>
</dbReference>
<dbReference type="SMR" id="P20156"/>
<dbReference type="BioGRID" id="248104">
    <property type="interactions" value="1"/>
</dbReference>
<dbReference type="FunCoup" id="P20156">
    <property type="interactions" value="285"/>
</dbReference>
<dbReference type="IntAct" id="P20156">
    <property type="interactions" value="1"/>
</dbReference>
<dbReference type="MINT" id="P20156"/>
<dbReference type="STRING" id="10116.ENSRNOP00000050024"/>
<dbReference type="CarbonylDB" id="P20156"/>
<dbReference type="iPTMnet" id="P20156"/>
<dbReference type="PhosphoSitePlus" id="P20156"/>
<dbReference type="jPOST" id="P20156"/>
<dbReference type="PaxDb" id="10116-ENSRNOP00000050024"/>
<dbReference type="Ensembl" id="ENSRNOT00000041808.3">
    <property type="protein sequence ID" value="ENSRNOP00000050024.3"/>
    <property type="gene ID" value="ENSRNOG00000001416.6"/>
</dbReference>
<dbReference type="GeneID" id="29461"/>
<dbReference type="KEGG" id="rno:29461"/>
<dbReference type="UCSC" id="RGD:69399">
    <property type="organism name" value="rat"/>
</dbReference>
<dbReference type="AGR" id="RGD:69399"/>
<dbReference type="CTD" id="7425"/>
<dbReference type="RGD" id="69399">
    <property type="gene designation" value="Vgf"/>
</dbReference>
<dbReference type="eggNOG" id="ENOG502S5N4">
    <property type="taxonomic scope" value="Eukaryota"/>
</dbReference>
<dbReference type="GeneTree" id="ENSGT00390000017745"/>
<dbReference type="InParanoid" id="P20156"/>
<dbReference type="OMA" id="EMPGHRR"/>
<dbReference type="OrthoDB" id="8926660at2759"/>
<dbReference type="PhylomeDB" id="P20156"/>
<dbReference type="Reactome" id="R-RNO-381426">
    <property type="pathway name" value="Regulation of Insulin-like Growth Factor (IGF) transport and uptake by Insulin-like Growth Factor Binding Proteins (IGFBPs)"/>
</dbReference>
<dbReference type="Reactome" id="R-RNO-8957275">
    <property type="pathway name" value="Post-translational protein phosphorylation"/>
</dbReference>
<dbReference type="PRO" id="PR:P20156"/>
<dbReference type="Proteomes" id="UP000002494">
    <property type="component" value="Chromosome 12"/>
</dbReference>
<dbReference type="GO" id="GO:0031410">
    <property type="term" value="C:cytoplasmic vesicle"/>
    <property type="evidence" value="ECO:0000266"/>
    <property type="project" value="RGD"/>
</dbReference>
<dbReference type="GO" id="GO:0005615">
    <property type="term" value="C:extracellular space"/>
    <property type="evidence" value="ECO:0000266"/>
    <property type="project" value="RGD"/>
</dbReference>
<dbReference type="GO" id="GO:0098978">
    <property type="term" value="C:glutamatergic synapse"/>
    <property type="evidence" value="ECO:0000314"/>
    <property type="project" value="SynGO"/>
</dbReference>
<dbReference type="GO" id="GO:0043025">
    <property type="term" value="C:neuronal cell body"/>
    <property type="evidence" value="ECO:0000314"/>
    <property type="project" value="RGD"/>
</dbReference>
<dbReference type="GO" id="GO:0045202">
    <property type="term" value="C:synapse"/>
    <property type="evidence" value="ECO:0000314"/>
    <property type="project" value="SynGO"/>
</dbReference>
<dbReference type="GO" id="GO:0030133">
    <property type="term" value="C:transport vesicle"/>
    <property type="evidence" value="ECO:0007669"/>
    <property type="project" value="UniProtKB-SubCell"/>
</dbReference>
<dbReference type="GO" id="GO:0008083">
    <property type="term" value="F:growth factor activity"/>
    <property type="evidence" value="ECO:0007669"/>
    <property type="project" value="UniProtKB-KW"/>
</dbReference>
<dbReference type="GO" id="GO:0005179">
    <property type="term" value="F:hormone activity"/>
    <property type="evidence" value="ECO:0000318"/>
    <property type="project" value="GO_Central"/>
</dbReference>
<dbReference type="GO" id="GO:0005184">
    <property type="term" value="F:neuropeptide hormone activity"/>
    <property type="evidence" value="ECO:0000266"/>
    <property type="project" value="RGD"/>
</dbReference>
<dbReference type="GO" id="GO:0033500">
    <property type="term" value="P:carbohydrate homeostasis"/>
    <property type="evidence" value="ECO:0000318"/>
    <property type="project" value="GO_Central"/>
</dbReference>
<dbReference type="GO" id="GO:0006091">
    <property type="term" value="P:generation of precursor metabolites and energy"/>
    <property type="evidence" value="ECO:0000266"/>
    <property type="project" value="RGD"/>
</dbReference>
<dbReference type="GO" id="GO:0042593">
    <property type="term" value="P:glucose homeostasis"/>
    <property type="evidence" value="ECO:0000266"/>
    <property type="project" value="RGD"/>
</dbReference>
<dbReference type="GO" id="GO:0030073">
    <property type="term" value="P:insulin secretion"/>
    <property type="evidence" value="ECO:0000266"/>
    <property type="project" value="RGD"/>
</dbReference>
<dbReference type="GO" id="GO:0050804">
    <property type="term" value="P:modulation of chemical synaptic transmission"/>
    <property type="evidence" value="ECO:0000314"/>
    <property type="project" value="SynGO"/>
</dbReference>
<dbReference type="GO" id="GO:0030182">
    <property type="term" value="P:neuron differentiation"/>
    <property type="evidence" value="ECO:0000304"/>
    <property type="project" value="RGD"/>
</dbReference>
<dbReference type="GO" id="GO:0001541">
    <property type="term" value="P:ovarian follicle development"/>
    <property type="evidence" value="ECO:0000266"/>
    <property type="project" value="RGD"/>
</dbReference>
<dbReference type="GO" id="GO:0048168">
    <property type="term" value="P:regulation of neuronal synaptic plasticity"/>
    <property type="evidence" value="ECO:0000314"/>
    <property type="project" value="RGD"/>
</dbReference>
<dbReference type="GO" id="GO:0048167">
    <property type="term" value="P:regulation of synaptic plasticity"/>
    <property type="evidence" value="ECO:0000318"/>
    <property type="project" value="GO_Central"/>
</dbReference>
<dbReference type="GO" id="GO:0051591">
    <property type="term" value="P:response to cAMP"/>
    <property type="evidence" value="ECO:0000266"/>
    <property type="project" value="RGD"/>
</dbReference>
<dbReference type="GO" id="GO:0009409">
    <property type="term" value="P:response to cold"/>
    <property type="evidence" value="ECO:0000266"/>
    <property type="project" value="RGD"/>
</dbReference>
<dbReference type="GO" id="GO:0002021">
    <property type="term" value="P:response to dietary excess"/>
    <property type="evidence" value="ECO:0000266"/>
    <property type="project" value="RGD"/>
</dbReference>
<dbReference type="GO" id="GO:0032868">
    <property type="term" value="P:response to insulin"/>
    <property type="evidence" value="ECO:0000266"/>
    <property type="project" value="RGD"/>
</dbReference>
<dbReference type="GO" id="GO:0019953">
    <property type="term" value="P:sexual reproduction"/>
    <property type="evidence" value="ECO:0000266"/>
    <property type="project" value="RGD"/>
</dbReference>
<dbReference type="GO" id="GO:0099538">
    <property type="term" value="P:synaptic signaling via neuropeptide"/>
    <property type="evidence" value="ECO:0000314"/>
    <property type="project" value="SynGO"/>
</dbReference>
<dbReference type="InterPro" id="IPR026128">
    <property type="entry name" value="VGF"/>
</dbReference>
<dbReference type="PANTHER" id="PTHR15159">
    <property type="entry name" value="NEUROSECRETORY PROTEIN VGF"/>
    <property type="match status" value="1"/>
</dbReference>
<dbReference type="PANTHER" id="PTHR15159:SF2">
    <property type="entry name" value="NEUROSECRETORY PROTEIN VGF"/>
    <property type="match status" value="1"/>
</dbReference>
<protein>
    <recommendedName>
        <fullName>Neurosecretory protein VGF</fullName>
    </recommendedName>
    <alternativeName>
        <fullName>VGF8a protein</fullName>
    </alternativeName>
    <component>
        <recommendedName>
            <fullName>VGF(24-63)</fullName>
        </recommendedName>
    </component>
    <component>
        <recommendedName>
            <fullName>VGF(180-194)</fullName>
        </recommendedName>
    </component>
    <component>
        <recommendedName>
            <fullName>VGF(375-407)</fullName>
        </recommendedName>
    </component>
    <component>
        <recommendedName>
            <fullName>Neuroendocrine regulatory peptide-1</fullName>
            <shortName>NERP-1</shortName>
        </recommendedName>
    </component>
    <component>
        <recommendedName>
            <fullName>Neuroendocrine regulatory peptide-2</fullName>
            <shortName>NERP-2</shortName>
        </recommendedName>
    </component>
    <component>
        <recommendedName>
            <fullName>VGF-derived peptide TLQP-11</fullName>
        </recommendedName>
    </component>
    <component>
        <recommendedName>
            <fullName>VGF-derived peptide TLQP-21</fullName>
        </recommendedName>
    </component>
    <component>
        <recommendedName>
            <fullName>VGF-derived peptide TLQP-30</fullName>
        </recommendedName>
    </component>
    <component>
        <recommendedName>
            <fullName>VGF-derived peptide TLQP-62</fullName>
        </recommendedName>
    </component>
    <component>
        <recommendedName>
            <fullName>VGF-derived peptide HFHH-10</fullName>
        </recommendedName>
    </component>
    <component>
        <recommendedName>
            <fullName>VGF-derived peptide AQEE-30</fullName>
        </recommendedName>
    </component>
    <component>
        <recommendedName>
            <fullName>VGF-derived peptide LQEQ-19</fullName>
        </recommendedName>
    </component>
</protein>